<sequence length="256" mass="27785">MGTDVWVGSWRPHRPRGPIAALYSSPGPKYSLPGNTGFVSHDPSRYRAPAYSMGNRRFKFVDDCSPGPGYLVPSNITVKGKDGTPAYSIYGRPKDISSFRTPGPGSYSPERAGKSAYRSAPTYSLGERTKTFSNDQTPGPAAYVLPSVIGPRIVNRISAPNYSMTGRSKIGSFHEDLQRTPGPGTYRVIDPGSYKHRPPQYSMTARNVLPGDTTIKPGPGAYSPEKVVMSRPQAPNFSFGIRHSDYVAPLIVDVAD</sequence>
<reference key="1">
    <citation type="submission" date="2006-10" db="EMBL/GenBank/DDBJ databases">
        <authorList>
            <consortium name="Sanger Xenopus tropicalis EST/cDNA project"/>
        </authorList>
    </citation>
    <scope>NUCLEOTIDE SEQUENCE [LARGE SCALE MRNA]</scope>
    <source>
        <tissue>Tadpole</tissue>
    </source>
</reference>
<reference key="2">
    <citation type="submission" date="2005-02" db="EMBL/GenBank/DDBJ databases">
        <authorList>
            <consortium name="NIH - Xenopus Gene Collection (XGC) project"/>
        </authorList>
    </citation>
    <scope>NUCLEOTIDE SEQUENCE [LARGE SCALE MRNA]</scope>
    <source>
        <tissue>Embryo</tissue>
    </source>
</reference>
<protein>
    <recommendedName>
        <fullName>Ciliary microtubule associated protein 1A</fullName>
    </recommendedName>
    <alternativeName>
        <fullName>Outer dense fiber of sperm tails protein 3</fullName>
    </alternativeName>
    <alternativeName>
        <fullName>Outer dense fiber protein 3</fullName>
    </alternativeName>
</protein>
<accession>Q5EB30</accession>
<keyword id="KW-0966">Cell projection</keyword>
<keyword id="KW-0969">Cilium</keyword>
<keyword id="KW-0963">Cytoplasm</keyword>
<keyword id="KW-0206">Cytoskeleton</keyword>
<keyword id="KW-0282">Flagellum</keyword>
<keyword id="KW-1185">Reference proteome</keyword>
<keyword id="KW-0677">Repeat</keyword>
<organism>
    <name type="scientific">Xenopus tropicalis</name>
    <name type="common">Western clawed frog</name>
    <name type="synonym">Silurana tropicalis</name>
    <dbReference type="NCBI Taxonomy" id="8364"/>
    <lineage>
        <taxon>Eukaryota</taxon>
        <taxon>Metazoa</taxon>
        <taxon>Chordata</taxon>
        <taxon>Craniata</taxon>
        <taxon>Vertebrata</taxon>
        <taxon>Euteleostomi</taxon>
        <taxon>Amphibia</taxon>
        <taxon>Batrachia</taxon>
        <taxon>Anura</taxon>
        <taxon>Pipoidea</taxon>
        <taxon>Pipidae</taxon>
        <taxon>Xenopodinae</taxon>
        <taxon>Xenopus</taxon>
        <taxon>Silurana</taxon>
    </lineage>
</organism>
<dbReference type="EMBL" id="CR926450">
    <property type="protein sequence ID" value="CAJ83130.1"/>
    <property type="molecule type" value="mRNA"/>
</dbReference>
<dbReference type="EMBL" id="BC090115">
    <property type="protein sequence ID" value="AAH90115.1"/>
    <property type="molecule type" value="mRNA"/>
</dbReference>
<dbReference type="RefSeq" id="NP_001015830.1">
    <property type="nucleotide sequence ID" value="NM_001015830.2"/>
</dbReference>
<dbReference type="SMR" id="Q5EB30"/>
<dbReference type="FunCoup" id="Q5EB30">
    <property type="interactions" value="45"/>
</dbReference>
<dbReference type="PaxDb" id="8364-ENSXETP00000034268"/>
<dbReference type="DNASU" id="548547"/>
<dbReference type="GeneID" id="548547"/>
<dbReference type="KEGG" id="xtr:548547"/>
<dbReference type="AGR" id="Xenbase:XB-GENE-5889414"/>
<dbReference type="CTD" id="113746"/>
<dbReference type="Xenbase" id="XB-GENE-5889414">
    <property type="gene designation" value="cimap1a"/>
</dbReference>
<dbReference type="eggNOG" id="ENOG502QUIJ">
    <property type="taxonomic scope" value="Eukaryota"/>
</dbReference>
<dbReference type="HOGENOM" id="CLU_088282_1_0_1"/>
<dbReference type="InParanoid" id="Q5EB30"/>
<dbReference type="OMA" id="KWIYRSA"/>
<dbReference type="OrthoDB" id="429991at2759"/>
<dbReference type="PhylomeDB" id="Q5EB30"/>
<dbReference type="Proteomes" id="UP000008143">
    <property type="component" value="Chromosome 3"/>
</dbReference>
<dbReference type="Bgee" id="ENSXETG00000015719">
    <property type="expression patterns" value="Expressed in testis and 13 other cell types or tissues"/>
</dbReference>
<dbReference type="ExpressionAtlas" id="Q5EB30">
    <property type="expression patterns" value="baseline"/>
</dbReference>
<dbReference type="GO" id="GO:0005737">
    <property type="term" value="C:cytoplasm"/>
    <property type="evidence" value="ECO:0007669"/>
    <property type="project" value="UniProtKB-SubCell"/>
</dbReference>
<dbReference type="GO" id="GO:0005856">
    <property type="term" value="C:cytoskeleton"/>
    <property type="evidence" value="ECO:0007669"/>
    <property type="project" value="UniProtKB-KW"/>
</dbReference>
<dbReference type="GO" id="GO:0031514">
    <property type="term" value="C:motile cilium"/>
    <property type="evidence" value="ECO:0007669"/>
    <property type="project" value="UniProtKB-KW"/>
</dbReference>
<dbReference type="InterPro" id="IPR051291">
    <property type="entry name" value="CIMAP"/>
</dbReference>
<dbReference type="InterPro" id="IPR010736">
    <property type="entry name" value="SHIPPO-rpt"/>
</dbReference>
<dbReference type="PANTHER" id="PTHR21580:SF28">
    <property type="entry name" value="BOREALIN N-TERMINAL DOMAIN-CONTAINING PROTEIN-RELATED"/>
    <property type="match status" value="1"/>
</dbReference>
<dbReference type="PANTHER" id="PTHR21580">
    <property type="entry name" value="SHIPPO-1-RELATED"/>
    <property type="match status" value="1"/>
</dbReference>
<dbReference type="Pfam" id="PF07004">
    <property type="entry name" value="SHIPPO-rpt"/>
    <property type="match status" value="5"/>
</dbReference>
<name>CMA1A_XENTR</name>
<evidence type="ECO:0000250" key="1">
    <source>
        <dbReference type="UniProtKB" id="Q920N1"/>
    </source>
</evidence>
<evidence type="ECO:0000305" key="2"/>
<feature type="chain" id="PRO_0000346439" description="Ciliary microtubule associated protein 1A">
    <location>
        <begin position="1"/>
        <end position="256"/>
    </location>
</feature>
<feature type="repeat" description="STPGR 1">
    <location>
        <begin position="66"/>
        <end position="92"/>
    </location>
</feature>
<feature type="repeat" description="STPGR 2">
    <location>
        <begin position="181"/>
        <end position="206"/>
    </location>
</feature>
<feature type="repeat" description="STPGR 3">
    <location>
        <begin position="217"/>
        <end position="242"/>
    </location>
</feature>
<proteinExistence type="evidence at transcript level"/>
<gene>
    <name type="primary">cimap1a</name>
    <name type="synonym">odf3</name>
    <name type="ORF">TTpA001k06.1</name>
</gene>
<comment type="function">
    <text evidence="1">Outer dense fibers are filamentous structures located on the outside of the axoneme in the midpiece and principal piece of the mammalian sperm tail. May help to maintain the passive elastic structures and elastic recoil of the sperm tail.</text>
</comment>
<comment type="subcellular location">
    <subcellularLocation>
        <location evidence="1">Cytoplasm</location>
    </subcellularLocation>
    <subcellularLocation>
        <location evidence="1">Cytoplasm</location>
        <location evidence="1">Cytoskeleton</location>
        <location evidence="1">Flagellum axoneme</location>
    </subcellularLocation>
    <text evidence="1">Expressed in the cytoplasmic lobe of spermatids.</text>
</comment>
<comment type="miscellaneous">
    <text evidence="1">'Shippo' is a Japanese word for tail.</text>
</comment>
<comment type="similarity">
    <text evidence="2">Belongs to the CIMAP family.</text>
</comment>